<sequence length="1438" mass="162983">MAMTNREKFKVLADQIKISNQLEQDILEQGELTRIDVSNKNRTWTFQISLPHFLSHEDYLLFTHAIEEEFKEIATVAIDFSIKDTNNQDEFALKYFGHCIDQTRLSPKVKGQLKQKKLIMSGNVLKVLVSNDIERNHFDKACNGSLVKAFRQCGFEIDKVVFETDSTNHDDDLASLEAHIQQEDEQSAREATEKLEKMKAEKAKQQDNNESTVEKCQIGKPIQIENIKPIESIIEEEFKVAIEGVIFDINLKELKSGRHIVELKVTDYTDSLVLKMFTRKNKDDLDHFKALSVGKWVRAQGRIEEDTFVRDLVMMMSDIEEIKKTPKQDKAEDKRVEFHLHTSMSQMDGIPNISAYVEQAAKWGHQALAVTDHNVVQAFPDAHNAAEKHGIKMIYGMEGMLVDDGVPIAYKPTDRNLKDATYVVFDVETTGLSNQYDKIIELAAVKVHNGEIIDKFERFSNPHERLSETIINLTHITDDMLTDAPEIEEVLTEFKEWVGDAIFVAHNASFDMGFIDTGYERLGFGPSTNGVIDTLELSRTINTEYGKHGLNFLAKKYGVELTQHHRAIYDTEATAYIFIKMVQQMKELGVNNHLEINKKLTNEDAYKRARPSHVTLIVQNQEGLKNLFKIVSASLVKYYYRTPRIPRSLLNEYREGILIGTACDEGELFTAVMQKDQSEVEKIAKFYDFIEVQPPALYQDLMDRELIRDNETLTQIYKRLIDAGKSANIPVIATGNAHYLYEHDAIARKILIASQPGNPLNRSTLPEAHFRTTDEMLDDFHFLGEEKAYEIVVTNTNELANKIEKVVPIKDKLFTPRMDGANEEIRELSYSNAKKLYGEDLPQIVIDRLEKELDSIIGNGFSVIYLISQRLVKKSLDDGYLVGSRGSVGSSFVATMTEITEVNPLPPHYICSHCKTSEFFDDGSVGSGFDLPDKKCPTCGNELIKEGQDIPFETFLGFKGDKVPDIDLNFSGEYQPNAHNYTKVLFGEDKVFRAGTIGTVAEKTAFGFVKGYLNDQGIHKRGAEIDRLVKGCTGVKRTTGQHPGGIIVVPDYMDIYDFTPIQFPADDQSAAWMTTHFDFHSIHDNVLKLDILGHDDPTMIRMLQDLSGIDPKTIPVDDKETMQIFSGPESLGVTEDEILCKTGTFGVPEFGTGFVRQMLEDTKPTTFSELVQISGLSHGTDVWLGNAQELIRQGICDLSSVIGCRDDIMVYLMYAGLEPSMAFKTMEFVRKGRGLTDEMVEAMKENNVPDWYLDSCRKIKYMFPKAHAAAYVLMAVRIAYFKVHHPLYYYAAYFTIRASDFDLITMIKDKTSIRNTVKDMYSRYMDLGKKEKDVLTVLEIMNEMAHRGFRLQPISLEKSQAFDFIIEGDTLIPPFISVPGLGENVAQRIVEAREEGPFLSKEDLNKKAGLSQKVIDYLDELGSLPDLPDKAQLSIFDM</sequence>
<name>DPO3_STAEQ</name>
<evidence type="ECO:0000255" key="1">
    <source>
        <dbReference type="HAMAP-Rule" id="MF_00356"/>
    </source>
</evidence>
<evidence type="ECO:0000305" key="2"/>
<dbReference type="EC" id="2.7.7.7" evidence="1"/>
<dbReference type="EMBL" id="CP000029">
    <property type="protein sequence ID" value="AAW54192.1"/>
    <property type="status" value="ALT_INIT"/>
    <property type="molecule type" value="Genomic_DNA"/>
</dbReference>
<dbReference type="SMR" id="Q5HPS7"/>
<dbReference type="STRING" id="176279.SERP0831"/>
<dbReference type="KEGG" id="ser:SERP0831"/>
<dbReference type="eggNOG" id="COG2176">
    <property type="taxonomic scope" value="Bacteria"/>
</dbReference>
<dbReference type="HOGENOM" id="CLU_003297_0_0_9"/>
<dbReference type="Proteomes" id="UP000000531">
    <property type="component" value="Chromosome"/>
</dbReference>
<dbReference type="GO" id="GO:0005737">
    <property type="term" value="C:cytoplasm"/>
    <property type="evidence" value="ECO:0007669"/>
    <property type="project" value="UniProtKB-SubCell"/>
</dbReference>
<dbReference type="GO" id="GO:0008408">
    <property type="term" value="F:3'-5' exonuclease activity"/>
    <property type="evidence" value="ECO:0007669"/>
    <property type="project" value="UniProtKB-UniRule"/>
</dbReference>
<dbReference type="GO" id="GO:0003677">
    <property type="term" value="F:DNA binding"/>
    <property type="evidence" value="ECO:0007669"/>
    <property type="project" value="UniProtKB-UniRule"/>
</dbReference>
<dbReference type="GO" id="GO:0003887">
    <property type="term" value="F:DNA-directed DNA polymerase activity"/>
    <property type="evidence" value="ECO:0007669"/>
    <property type="project" value="UniProtKB-UniRule"/>
</dbReference>
<dbReference type="GO" id="GO:0006261">
    <property type="term" value="P:DNA-templated DNA replication"/>
    <property type="evidence" value="ECO:0007669"/>
    <property type="project" value="UniProtKB-UniRule"/>
</dbReference>
<dbReference type="CDD" id="cd06127">
    <property type="entry name" value="DEDDh"/>
    <property type="match status" value="1"/>
</dbReference>
<dbReference type="CDD" id="cd07435">
    <property type="entry name" value="PHP_PolIIIA_POLC"/>
    <property type="match status" value="1"/>
</dbReference>
<dbReference type="CDD" id="cd04484">
    <property type="entry name" value="polC_OBF"/>
    <property type="match status" value="1"/>
</dbReference>
<dbReference type="FunFam" id="3.30.420.10:FF:000045">
    <property type="entry name" value="3'-5' exonuclease DinG"/>
    <property type="match status" value="1"/>
</dbReference>
<dbReference type="Gene3D" id="1.10.150.870">
    <property type="match status" value="1"/>
</dbReference>
<dbReference type="Gene3D" id="3.30.1900.20">
    <property type="match status" value="2"/>
</dbReference>
<dbReference type="Gene3D" id="6.10.140.1510">
    <property type="match status" value="1"/>
</dbReference>
<dbReference type="Gene3D" id="3.20.20.140">
    <property type="entry name" value="Metal-dependent hydrolases"/>
    <property type="match status" value="1"/>
</dbReference>
<dbReference type="Gene3D" id="2.40.50.140">
    <property type="entry name" value="Nucleic acid-binding proteins"/>
    <property type="match status" value="1"/>
</dbReference>
<dbReference type="Gene3D" id="1.10.150.700">
    <property type="entry name" value="PolC, middle finger domain"/>
    <property type="match status" value="1"/>
</dbReference>
<dbReference type="Gene3D" id="3.30.420.10">
    <property type="entry name" value="Ribonuclease H-like superfamily/Ribonuclease H"/>
    <property type="match status" value="1"/>
</dbReference>
<dbReference type="HAMAP" id="MF_00356">
    <property type="entry name" value="DNApol_PolC"/>
    <property type="match status" value="1"/>
</dbReference>
<dbReference type="InterPro" id="IPR011708">
    <property type="entry name" value="DNA_pol3_alpha_NTPase_dom"/>
</dbReference>
<dbReference type="InterPro" id="IPR040982">
    <property type="entry name" value="DNA_pol3_finger"/>
</dbReference>
<dbReference type="InterPro" id="IPR024754">
    <property type="entry name" value="DNA_PolC-like_N_II"/>
</dbReference>
<dbReference type="InterPro" id="IPR028112">
    <property type="entry name" value="DNA_PolC-type_N_I"/>
</dbReference>
<dbReference type="InterPro" id="IPR004805">
    <property type="entry name" value="DnaE2/DnaE/PolC"/>
</dbReference>
<dbReference type="InterPro" id="IPR029460">
    <property type="entry name" value="DNAPol_HHH"/>
</dbReference>
<dbReference type="InterPro" id="IPR006054">
    <property type="entry name" value="DnaQ"/>
</dbReference>
<dbReference type="InterPro" id="IPR013520">
    <property type="entry name" value="Exonuclease_RNaseT/DNA_pol3"/>
</dbReference>
<dbReference type="InterPro" id="IPR012340">
    <property type="entry name" value="NA-bd_OB-fold"/>
</dbReference>
<dbReference type="InterPro" id="IPR004013">
    <property type="entry name" value="PHP_dom"/>
</dbReference>
<dbReference type="InterPro" id="IPR003141">
    <property type="entry name" value="Pol/His_phosphatase_N"/>
</dbReference>
<dbReference type="InterPro" id="IPR006308">
    <property type="entry name" value="Pol_III_a_PolC-type_gram_pos"/>
</dbReference>
<dbReference type="InterPro" id="IPR044923">
    <property type="entry name" value="PolC_middle_finger_sf"/>
</dbReference>
<dbReference type="InterPro" id="IPR012337">
    <property type="entry name" value="RNaseH-like_sf"/>
</dbReference>
<dbReference type="InterPro" id="IPR036397">
    <property type="entry name" value="RNaseH_sf"/>
</dbReference>
<dbReference type="NCBIfam" id="TIGR00573">
    <property type="entry name" value="dnaq"/>
    <property type="match status" value="1"/>
</dbReference>
<dbReference type="NCBIfam" id="TIGR01405">
    <property type="entry name" value="polC_Gram_pos"/>
    <property type="match status" value="1"/>
</dbReference>
<dbReference type="NCBIfam" id="NF001688">
    <property type="entry name" value="PRK00448.1"/>
    <property type="match status" value="1"/>
</dbReference>
<dbReference type="PANTHER" id="PTHR32294:SF5">
    <property type="entry name" value="DNA POLYMERASE III POLC-TYPE"/>
    <property type="match status" value="1"/>
</dbReference>
<dbReference type="PANTHER" id="PTHR32294">
    <property type="entry name" value="DNA POLYMERASE III SUBUNIT ALPHA"/>
    <property type="match status" value="1"/>
</dbReference>
<dbReference type="Pfam" id="PF14480">
    <property type="entry name" value="DNA_pol3_a_NI"/>
    <property type="match status" value="1"/>
</dbReference>
<dbReference type="Pfam" id="PF11490">
    <property type="entry name" value="DNA_pol3_a_NII"/>
    <property type="match status" value="1"/>
</dbReference>
<dbReference type="Pfam" id="PF07733">
    <property type="entry name" value="DNA_pol3_alpha"/>
    <property type="match status" value="2"/>
</dbReference>
<dbReference type="Pfam" id="PF17657">
    <property type="entry name" value="DNA_pol3_finger"/>
    <property type="match status" value="1"/>
</dbReference>
<dbReference type="Pfam" id="PF14579">
    <property type="entry name" value="HHH_6"/>
    <property type="match status" value="1"/>
</dbReference>
<dbReference type="Pfam" id="PF02811">
    <property type="entry name" value="PHP"/>
    <property type="match status" value="2"/>
</dbReference>
<dbReference type="Pfam" id="PF00929">
    <property type="entry name" value="RNase_T"/>
    <property type="match status" value="1"/>
</dbReference>
<dbReference type="SMART" id="SM00479">
    <property type="entry name" value="EXOIII"/>
    <property type="match status" value="1"/>
</dbReference>
<dbReference type="SMART" id="SM00481">
    <property type="entry name" value="POLIIIAc"/>
    <property type="match status" value="1"/>
</dbReference>
<dbReference type="SUPFAM" id="SSF81585">
    <property type="entry name" value="PsbU/PolX domain-like"/>
    <property type="match status" value="1"/>
</dbReference>
<dbReference type="SUPFAM" id="SSF53098">
    <property type="entry name" value="Ribonuclease H-like"/>
    <property type="match status" value="1"/>
</dbReference>
<organism>
    <name type="scientific">Staphylococcus epidermidis (strain ATCC 35984 / DSM 28319 / BCRC 17069 / CCUG 31568 / BM 3577 / RP62A)</name>
    <dbReference type="NCBI Taxonomy" id="176279"/>
    <lineage>
        <taxon>Bacteria</taxon>
        <taxon>Bacillati</taxon>
        <taxon>Bacillota</taxon>
        <taxon>Bacilli</taxon>
        <taxon>Bacillales</taxon>
        <taxon>Staphylococcaceae</taxon>
        <taxon>Staphylococcus</taxon>
    </lineage>
</organism>
<comment type="function">
    <text evidence="1">Required for replicative DNA synthesis. This DNA polymerase also exhibits 3' to 5' exonuclease activity.</text>
</comment>
<comment type="catalytic activity">
    <reaction evidence="1">
        <text>DNA(n) + a 2'-deoxyribonucleoside 5'-triphosphate = DNA(n+1) + diphosphate</text>
        <dbReference type="Rhea" id="RHEA:22508"/>
        <dbReference type="Rhea" id="RHEA-COMP:17339"/>
        <dbReference type="Rhea" id="RHEA-COMP:17340"/>
        <dbReference type="ChEBI" id="CHEBI:33019"/>
        <dbReference type="ChEBI" id="CHEBI:61560"/>
        <dbReference type="ChEBI" id="CHEBI:173112"/>
        <dbReference type="EC" id="2.7.7.7"/>
    </reaction>
</comment>
<comment type="subcellular location">
    <subcellularLocation>
        <location evidence="1">Cytoplasm</location>
    </subcellularLocation>
</comment>
<comment type="similarity">
    <text evidence="1">Belongs to the DNA polymerase type-C family. PolC subfamily.</text>
</comment>
<comment type="sequence caution" evidence="2">
    <conflict type="erroneous initiation">
        <sequence resource="EMBL-CDS" id="AAW54192"/>
    </conflict>
</comment>
<reference key="1">
    <citation type="journal article" date="2005" name="J. Bacteriol.">
        <title>Insights on evolution of virulence and resistance from the complete genome analysis of an early methicillin-resistant Staphylococcus aureus strain and a biofilm-producing methicillin-resistant Staphylococcus epidermidis strain.</title>
        <authorList>
            <person name="Gill S.R."/>
            <person name="Fouts D.E."/>
            <person name="Archer G.L."/>
            <person name="Mongodin E.F."/>
            <person name="DeBoy R.T."/>
            <person name="Ravel J."/>
            <person name="Paulsen I.T."/>
            <person name="Kolonay J.F."/>
            <person name="Brinkac L.M."/>
            <person name="Beanan M.J."/>
            <person name="Dodson R.J."/>
            <person name="Daugherty S.C."/>
            <person name="Madupu R."/>
            <person name="Angiuoli S.V."/>
            <person name="Durkin A.S."/>
            <person name="Haft D.H."/>
            <person name="Vamathevan J.J."/>
            <person name="Khouri H."/>
            <person name="Utterback T.R."/>
            <person name="Lee C."/>
            <person name="Dimitrov G."/>
            <person name="Jiang L."/>
            <person name="Qin H."/>
            <person name="Weidman J."/>
            <person name="Tran K."/>
            <person name="Kang K.H."/>
            <person name="Hance I.R."/>
            <person name="Nelson K.E."/>
            <person name="Fraser C.M."/>
        </authorList>
    </citation>
    <scope>NUCLEOTIDE SEQUENCE [LARGE SCALE GENOMIC DNA]</scope>
    <source>
        <strain>ATCC 35984 / DSM 28319 / BCRC 17069 / CCUG 31568 / BM 3577 / RP62A</strain>
    </source>
</reference>
<protein>
    <recommendedName>
        <fullName evidence="1">DNA polymerase III PolC-type</fullName>
        <shortName evidence="1">PolIII</shortName>
        <ecNumber evidence="1">2.7.7.7</ecNumber>
    </recommendedName>
</protein>
<keyword id="KW-0963">Cytoplasm</keyword>
<keyword id="KW-0235">DNA replication</keyword>
<keyword id="KW-0239">DNA-directed DNA polymerase</keyword>
<keyword id="KW-0269">Exonuclease</keyword>
<keyword id="KW-0378">Hydrolase</keyword>
<keyword id="KW-0540">Nuclease</keyword>
<keyword id="KW-0548">Nucleotidyltransferase</keyword>
<keyword id="KW-1185">Reference proteome</keyword>
<keyword id="KW-0808">Transferase</keyword>
<proteinExistence type="inferred from homology"/>
<accession>Q5HPS7</accession>
<feature type="chain" id="PRO_0000204594" description="DNA polymerase III PolC-type">
    <location>
        <begin position="1"/>
        <end position="1438"/>
    </location>
</feature>
<feature type="domain" description="Exonuclease">
    <location>
        <begin position="422"/>
        <end position="578"/>
    </location>
</feature>
<gene>
    <name evidence="1" type="primary">polC</name>
    <name type="ordered locus">SERP0831</name>
</gene>